<dbReference type="EC" id="3.1.3.-"/>
<dbReference type="EMBL" id="AY283928">
    <property type="protein sequence ID" value="AAQ64142.1"/>
    <property type="molecule type" value="Genomic_DNA"/>
</dbReference>
<dbReference type="RefSeq" id="NP_899319.1">
    <property type="nucleotide sequence ID" value="NC_005083.2"/>
</dbReference>
<dbReference type="SMR" id="P59935"/>
<dbReference type="GeneID" id="2545825"/>
<dbReference type="KEGG" id="vg:2545825"/>
<dbReference type="OrthoDB" id="10493at10239"/>
<dbReference type="Proteomes" id="UP000001785">
    <property type="component" value="Genome"/>
</dbReference>
<dbReference type="GO" id="GO:0008253">
    <property type="term" value="F:5'-nucleotidase activity"/>
    <property type="evidence" value="ECO:0007669"/>
    <property type="project" value="InterPro"/>
</dbReference>
<dbReference type="GO" id="GO:0046872">
    <property type="term" value="F:metal ion binding"/>
    <property type="evidence" value="ECO:0007669"/>
    <property type="project" value="UniProtKB-KW"/>
</dbReference>
<dbReference type="GO" id="GO:0009223">
    <property type="term" value="P:pyrimidine deoxyribonucleotide catabolic process"/>
    <property type="evidence" value="ECO:0007669"/>
    <property type="project" value="TreeGrafter"/>
</dbReference>
<dbReference type="Gene3D" id="3.40.50.1000">
    <property type="entry name" value="HAD superfamily/HAD-like"/>
    <property type="match status" value="1"/>
</dbReference>
<dbReference type="InterPro" id="IPR010708">
    <property type="entry name" value="5'(3')-deoxyribonucleotidase"/>
</dbReference>
<dbReference type="InterPro" id="IPR036412">
    <property type="entry name" value="HAD-like_sf"/>
</dbReference>
<dbReference type="InterPro" id="IPR023214">
    <property type="entry name" value="HAD_sf"/>
</dbReference>
<dbReference type="PANTHER" id="PTHR16504">
    <property type="entry name" value="5'(3')-DEOXYRIBONUCLEOTIDASE"/>
    <property type="match status" value="1"/>
</dbReference>
<dbReference type="PANTHER" id="PTHR16504:SF4">
    <property type="entry name" value="5'(3')-DEOXYRIBONUCLEOTIDASE"/>
    <property type="match status" value="1"/>
</dbReference>
<dbReference type="Pfam" id="PF06941">
    <property type="entry name" value="NT5C"/>
    <property type="match status" value="1"/>
</dbReference>
<dbReference type="SFLD" id="SFLDG01145">
    <property type="entry name" value="C1.2.1"/>
    <property type="match status" value="1"/>
</dbReference>
<dbReference type="SFLD" id="SFLDG01126">
    <property type="entry name" value="C1.2:_Nucleotidase_Like"/>
    <property type="match status" value="1"/>
</dbReference>
<dbReference type="SUPFAM" id="SSF56784">
    <property type="entry name" value="HAD-like"/>
    <property type="match status" value="1"/>
</dbReference>
<name>53DR_BPKVM</name>
<keyword id="KW-0378">Hydrolase</keyword>
<keyword id="KW-0460">Magnesium</keyword>
<keyword id="KW-0479">Metal-binding</keyword>
<keyword id="KW-1185">Reference proteome</keyword>
<evidence type="ECO:0000250" key="1">
    <source>
        <dbReference type="UniProtKB" id="Q8CTG7"/>
    </source>
</evidence>
<evidence type="ECO:0000250" key="2">
    <source>
        <dbReference type="UniProtKB" id="Q97JQ5"/>
    </source>
</evidence>
<evidence type="ECO:0000305" key="3"/>
<organismHost>
    <name type="scientific">Vibrio parahaemolyticus</name>
    <dbReference type="NCBI Taxonomy" id="670"/>
</organismHost>
<gene>
    <name type="ordered locus">KVP40.0071</name>
</gene>
<comment type="function">
    <text evidence="3">Dephosphorylates the 5' and 2'(3')-phosphates of deoxyribonucleotides.</text>
</comment>
<comment type="cofactor">
    <cofactor evidence="2">
        <name>Mg(2+)</name>
        <dbReference type="ChEBI" id="CHEBI:18420"/>
    </cofactor>
</comment>
<comment type="similarity">
    <text evidence="3">Belongs to the 5'(3')-deoxyribonucleotidase family.</text>
</comment>
<reference key="1">
    <citation type="journal article" date="2003" name="J. Bacteriol.">
        <title>Complete genome sequence of the broad-host-range vibriophage KVP40: comparative genomics of a T4-related bacteriophage.</title>
        <authorList>
            <person name="Miller E.S."/>
            <person name="Heidelberg J.F."/>
            <person name="Eisen J.A."/>
            <person name="Nelson W.C."/>
            <person name="Durkin A.S."/>
            <person name="Ciecko A."/>
            <person name="Feldblyum T.V."/>
            <person name="White O."/>
            <person name="Paulsen I.T."/>
            <person name="Nierman W.C."/>
            <person name="Lee J."/>
            <person name="Szczypinski B."/>
            <person name="Fraser C.M."/>
        </authorList>
    </citation>
    <scope>NUCLEOTIDE SEQUENCE [GENOMIC DNA]</scope>
</reference>
<organism>
    <name type="scientific">Vibrio phage KVP40 (isolate Vibrio parahaemolyticus/Japan/Matsuzaki/1991)</name>
    <name type="common">KVP40</name>
    <name type="synonym">Bacteriophage KVP40</name>
    <dbReference type="NCBI Taxonomy" id="75320"/>
    <lineage>
        <taxon>Viruses</taxon>
        <taxon>Duplodnaviria</taxon>
        <taxon>Heunggongvirae</taxon>
        <taxon>Uroviricota</taxon>
        <taxon>Caudoviricetes</taxon>
        <taxon>Straboviridae</taxon>
        <taxon>Schizotequatrovirus</taxon>
        <taxon>Schizotequatrovirus KVP40</taxon>
    </lineage>
</organism>
<accession>P59935</accession>
<sequence>MKLMNVVKLMIRAIARAKKTDKPIVYIDMDNVLVDFQSGIDSLSIWEKNQYEGRYDECPGIFAHMKPMKGAIAAFEVLNKHFDCYILSTAPWDNPGSWQDKRLWVERYLGKGAYKRLILSHHKQLNFGHYLIDDRTKNGAGEFMGEHIHFGTDEFPDWFSVVTYLTSENK</sequence>
<protein>
    <recommendedName>
        <fullName>Putative 5'(3')-deoxyribonucleotidase</fullName>
        <ecNumber>3.1.3.-</ecNumber>
    </recommendedName>
</protein>
<proteinExistence type="inferred from homology"/>
<feature type="chain" id="PRO_0000164388" description="Putative 5'(3')-deoxyribonucleotidase">
    <location>
        <begin position="1"/>
        <end position="170"/>
    </location>
</feature>
<feature type="active site" description="Nucleophile" evidence="3">
    <location>
        <position position="28"/>
    </location>
</feature>
<feature type="active site" description="Proton donor" evidence="3">
    <location>
        <position position="30"/>
    </location>
</feature>
<feature type="binding site" evidence="1">
    <location>
        <position position="28"/>
    </location>
    <ligand>
        <name>Mg(2+)</name>
        <dbReference type="ChEBI" id="CHEBI:18420"/>
    </ligand>
</feature>
<feature type="binding site" evidence="1">
    <location>
        <position position="30"/>
    </location>
    <ligand>
        <name>Mg(2+)</name>
        <dbReference type="ChEBI" id="CHEBI:18420"/>
    </ligand>
</feature>
<feature type="binding site" evidence="1">
    <location>
        <position position="134"/>
    </location>
    <ligand>
        <name>Mg(2+)</name>
        <dbReference type="ChEBI" id="CHEBI:18420"/>
    </ligand>
</feature>